<proteinExistence type="inferred from homology"/>
<sequence length="127" mass="13824">MAPKAEKKPASKAPAAKKTTASTDASKKRTKTRKETYSSYIYKVLKQTHPDTGISQKSMSILNSFVNDIFERIASEASKLAAYNKKSTISAREIQTAVRLILPGELAKHAVSEGTRAVTKYSSSTQA</sequence>
<comment type="function">
    <text>Core component of nucleosome. Nucleosomes wrap and compact DNA into chromatin, limiting DNA accessibility to the cellular machineries which require DNA as a template. Histones thereby play a central role in transcription regulation, DNA repair, DNA replication and chromosomal stability. DNA accessibility is regulated via a complex set of post-translational modifications of histones, also called histone code, and nucleosome remodeling.</text>
</comment>
<comment type="subunit">
    <text>The nucleosome is a histone octamer containing two molecules each of H2A, H2B, H3 and H4 assembled in one H3-H4 heterotetramer and two H2A-H2B heterodimers. The octamer wraps approximately 147 bp of DNA.</text>
</comment>
<comment type="subcellular location">
    <subcellularLocation>
        <location evidence="1">Nucleus</location>
    </subcellularLocation>
    <subcellularLocation>
        <location evidence="1">Chromosome</location>
    </subcellularLocation>
</comment>
<comment type="PTM">
    <text evidence="1">Monoubiquitinated by the UBC2-BRE1 complex to form H2BK123ub1. H2BK123ub1 gives a specific tag for epigenetic transcriptional activation and is also prerequisite for H3K4me and H3K79me formation. H2BK123ub1 also modulates the formation of double-strand breaks during meiosis and is a prerequisite for DNA-damage checkpoint activation (By similarity).</text>
</comment>
<comment type="PTM">
    <text evidence="1">Phosphorylated by STE20 to form H2BS10ph during progression through meiotic prophase. May be correlated with chromosome condensation (By similarity).</text>
</comment>
<comment type="PTM">
    <text evidence="1">Acetylation of N-terminal lysines and particularly formation of H2BK11ac has a positive effect on transcription.</text>
</comment>
<comment type="PTM">
    <text evidence="1">Sumoylation to form H2BK6su or H2BK7su occurs preferentially near the telomeres and represses gene transcription.</text>
</comment>
<comment type="similarity">
    <text evidence="3">Belongs to the histone H2B family.</text>
</comment>
<comment type="caution">
    <text evidence="3">To ensure consistency between histone entries, we follow the 'Brno' nomenclature for histone modifications, with positions referring to those used in the literature for the 'closest' model organism. Due to slight variations in histone sequences between organisms and to the presence of initiator methionine in UniProtKB/Swiss-Prot sequences, the actual positions of modified amino acids in the sequence generally differ. In this entry the following conventions are used: H2BK6ac = acetylated Lys-7; H2BK6su = sumoylated Lys-7; H2BK7ac = acetylated Lys-8; H2BK7su = sumoylated Lys-8; H2BS10ph = phosphorylated Ser-11; H2BK11ac = acetylated Lys-12; H2BK123ub1 = monoubiquitinated Lys-120.</text>
</comment>
<protein>
    <recommendedName>
        <fullName>Histone H2B.2</fullName>
    </recommendedName>
</protein>
<gene>
    <name type="primary">HTB2</name>
    <name type="ordered locus">AEL002W</name>
</gene>
<dbReference type="EMBL" id="AF384989">
    <property type="protein sequence ID" value="AAO15411.1"/>
    <property type="molecule type" value="Genomic_DNA"/>
</dbReference>
<dbReference type="EMBL" id="AE016818">
    <property type="protein sequence ID" value="AAS52683.1"/>
    <property type="molecule type" value="Genomic_DNA"/>
</dbReference>
<dbReference type="RefSeq" id="NP_984859.1">
    <property type="nucleotide sequence ID" value="NM_210213.1"/>
</dbReference>
<dbReference type="SMR" id="Q8J1F8"/>
<dbReference type="FunCoup" id="Q8J1F8">
    <property type="interactions" value="1271"/>
</dbReference>
<dbReference type="STRING" id="284811.Q8J1F8"/>
<dbReference type="EnsemblFungi" id="AAS52683">
    <property type="protein sequence ID" value="AAS52683"/>
    <property type="gene ID" value="AGOS_AEL002W"/>
</dbReference>
<dbReference type="GeneID" id="4621058"/>
<dbReference type="KEGG" id="ago:AGOS_AEL002W"/>
<dbReference type="eggNOG" id="KOG1744">
    <property type="taxonomic scope" value="Eukaryota"/>
</dbReference>
<dbReference type="HOGENOM" id="CLU_075666_1_3_1"/>
<dbReference type="InParanoid" id="Q8J1F8"/>
<dbReference type="OMA" id="SEVEYMG"/>
<dbReference type="OrthoDB" id="10254238at2759"/>
<dbReference type="Proteomes" id="UP000000591">
    <property type="component" value="Chromosome V"/>
</dbReference>
<dbReference type="GO" id="GO:0000786">
    <property type="term" value="C:nucleosome"/>
    <property type="evidence" value="ECO:0007669"/>
    <property type="project" value="UniProtKB-KW"/>
</dbReference>
<dbReference type="GO" id="GO:0005634">
    <property type="term" value="C:nucleus"/>
    <property type="evidence" value="ECO:0007669"/>
    <property type="project" value="UniProtKB-SubCell"/>
</dbReference>
<dbReference type="GO" id="GO:0003677">
    <property type="term" value="F:DNA binding"/>
    <property type="evidence" value="ECO:0000318"/>
    <property type="project" value="GO_Central"/>
</dbReference>
<dbReference type="GO" id="GO:0046982">
    <property type="term" value="F:protein heterodimerization activity"/>
    <property type="evidence" value="ECO:0007669"/>
    <property type="project" value="InterPro"/>
</dbReference>
<dbReference type="GO" id="GO:0030527">
    <property type="term" value="F:structural constituent of chromatin"/>
    <property type="evidence" value="ECO:0007669"/>
    <property type="project" value="InterPro"/>
</dbReference>
<dbReference type="CDD" id="cd22910">
    <property type="entry name" value="HFD_H2B"/>
    <property type="match status" value="1"/>
</dbReference>
<dbReference type="FunFam" id="1.10.20.10:FF:000014">
    <property type="entry name" value="Histone H2B"/>
    <property type="match status" value="1"/>
</dbReference>
<dbReference type="Gene3D" id="1.10.20.10">
    <property type="entry name" value="Histone, subunit A"/>
    <property type="match status" value="1"/>
</dbReference>
<dbReference type="InterPro" id="IPR009072">
    <property type="entry name" value="Histone-fold"/>
</dbReference>
<dbReference type="InterPro" id="IPR007125">
    <property type="entry name" value="Histone_H2A/H2B/H3"/>
</dbReference>
<dbReference type="InterPro" id="IPR000558">
    <property type="entry name" value="Histone_H2B"/>
</dbReference>
<dbReference type="InterPro" id="IPR055333">
    <property type="entry name" value="HISTONE_H2B_site"/>
</dbReference>
<dbReference type="PANTHER" id="PTHR23428">
    <property type="entry name" value="HISTONE H2B"/>
    <property type="match status" value="1"/>
</dbReference>
<dbReference type="Pfam" id="PF00125">
    <property type="entry name" value="Histone"/>
    <property type="match status" value="1"/>
</dbReference>
<dbReference type="PRINTS" id="PR00621">
    <property type="entry name" value="HISTONEH2B"/>
</dbReference>
<dbReference type="SMART" id="SM00427">
    <property type="entry name" value="H2B"/>
    <property type="match status" value="1"/>
</dbReference>
<dbReference type="SUPFAM" id="SSF47113">
    <property type="entry name" value="Histone-fold"/>
    <property type="match status" value="1"/>
</dbReference>
<dbReference type="PROSITE" id="PS00357">
    <property type="entry name" value="HISTONE_H2B"/>
    <property type="match status" value="1"/>
</dbReference>
<accession>Q8J1F8</accession>
<evidence type="ECO:0000250" key="1"/>
<evidence type="ECO:0000256" key="2">
    <source>
        <dbReference type="SAM" id="MobiDB-lite"/>
    </source>
</evidence>
<evidence type="ECO:0000305" key="3"/>
<organism>
    <name type="scientific">Eremothecium gossypii (strain ATCC 10895 / CBS 109.51 / FGSC 9923 / NRRL Y-1056)</name>
    <name type="common">Yeast</name>
    <name type="synonym">Ashbya gossypii</name>
    <dbReference type="NCBI Taxonomy" id="284811"/>
    <lineage>
        <taxon>Eukaryota</taxon>
        <taxon>Fungi</taxon>
        <taxon>Dikarya</taxon>
        <taxon>Ascomycota</taxon>
        <taxon>Saccharomycotina</taxon>
        <taxon>Saccharomycetes</taxon>
        <taxon>Saccharomycetales</taxon>
        <taxon>Saccharomycetaceae</taxon>
        <taxon>Eremothecium</taxon>
    </lineage>
</organism>
<reference key="1">
    <citation type="submission" date="2001-05" db="EMBL/GenBank/DDBJ databases">
        <title>Isolation and functional analysis of centromeric DNA of the filamentous ascomycete Ashbya gossypii.</title>
        <authorList>
            <person name="Wendland J."/>
            <person name="Dietrich F.S."/>
            <person name="Mohr C."/>
            <person name="Philippsen P."/>
        </authorList>
    </citation>
    <scope>NUCLEOTIDE SEQUENCE [GENOMIC DNA]</scope>
    <source>
        <strain>ATCC 10895 / CBS 109.51 / FGSC 9923 / NRRL Y-1056</strain>
    </source>
</reference>
<reference key="2">
    <citation type="journal article" date="2004" name="Science">
        <title>The Ashbya gossypii genome as a tool for mapping the ancient Saccharomyces cerevisiae genome.</title>
        <authorList>
            <person name="Dietrich F.S."/>
            <person name="Voegeli S."/>
            <person name="Brachat S."/>
            <person name="Lerch A."/>
            <person name="Gates K."/>
            <person name="Steiner S."/>
            <person name="Mohr C."/>
            <person name="Poehlmann R."/>
            <person name="Luedi P."/>
            <person name="Choi S."/>
            <person name="Wing R.A."/>
            <person name="Flavier A."/>
            <person name="Gaffney T.D."/>
            <person name="Philippsen P."/>
        </authorList>
    </citation>
    <scope>NUCLEOTIDE SEQUENCE [LARGE SCALE GENOMIC DNA]</scope>
    <source>
        <strain>ATCC 10895 / CBS 109.51 / FGSC 9923 / NRRL Y-1056</strain>
    </source>
</reference>
<reference key="3">
    <citation type="journal article" date="2013" name="G3 (Bethesda)">
        <title>Genomes of Ashbya fungi isolated from insects reveal four mating-type loci, numerous translocations, lack of transposons, and distinct gene duplications.</title>
        <authorList>
            <person name="Dietrich F.S."/>
            <person name="Voegeli S."/>
            <person name="Kuo S."/>
            <person name="Philippsen P."/>
        </authorList>
    </citation>
    <scope>GENOME REANNOTATION</scope>
    <source>
        <strain>ATCC 10895 / CBS 109.51 / FGSC 9923 / NRRL Y-1056</strain>
    </source>
</reference>
<feature type="initiator methionine" description="Removed" evidence="1">
    <location>
        <position position="1"/>
    </location>
</feature>
<feature type="chain" id="PRO_0000071929" description="Histone H2B.2">
    <location>
        <begin position="2"/>
        <end position="127"/>
    </location>
</feature>
<feature type="region of interest" description="Disordered" evidence="2">
    <location>
        <begin position="1"/>
        <end position="35"/>
    </location>
</feature>
<feature type="compositionally biased region" description="Low complexity" evidence="2">
    <location>
        <begin position="11"/>
        <end position="24"/>
    </location>
</feature>
<feature type="modified residue" description="N6-acetyllysine; alternate" evidence="1">
    <location>
        <position position="7"/>
    </location>
</feature>
<feature type="modified residue" description="N6-acetyllysine; alternate" evidence="1">
    <location>
        <position position="8"/>
    </location>
</feature>
<feature type="modified residue" description="Phosphoserine" evidence="1">
    <location>
        <position position="11"/>
    </location>
</feature>
<feature type="modified residue" description="N6-acetyllysine" evidence="1">
    <location>
        <position position="12"/>
    </location>
</feature>
<feature type="cross-link" description="Glycyl lysine isopeptide (Lys-Gly) (interchain with G-Cter in SUMO); alternate" evidence="1">
    <location>
        <position position="7"/>
    </location>
</feature>
<feature type="cross-link" description="Glycyl lysine isopeptide (Lys-Gly) (interchain with G-Cter in SUMO); alternate" evidence="1">
    <location>
        <position position="8"/>
    </location>
</feature>
<feature type="cross-link" description="Glycyl lysine isopeptide (Lys-Gly) (interchain with G-Cter in ubiquitin)" evidence="1">
    <location>
        <position position="120"/>
    </location>
</feature>
<keyword id="KW-0007">Acetylation</keyword>
<keyword id="KW-0158">Chromosome</keyword>
<keyword id="KW-0238">DNA-binding</keyword>
<keyword id="KW-1017">Isopeptide bond</keyword>
<keyword id="KW-0544">Nucleosome core</keyword>
<keyword id="KW-0539">Nucleus</keyword>
<keyword id="KW-0597">Phosphoprotein</keyword>
<keyword id="KW-1185">Reference proteome</keyword>
<keyword id="KW-0832">Ubl conjugation</keyword>
<name>H2B2_EREGS</name>